<dbReference type="EC" id="6.3.4.3" evidence="1"/>
<dbReference type="EMBL" id="AE014074">
    <property type="protein sequence ID" value="AAM79460.1"/>
    <property type="molecule type" value="Genomic_DNA"/>
</dbReference>
<dbReference type="RefSeq" id="WP_002989724.1">
    <property type="nucleotide sequence ID" value="NC_004070.1"/>
</dbReference>
<dbReference type="SMR" id="P0DF90"/>
<dbReference type="KEGG" id="spg:SpyM3_0853"/>
<dbReference type="HOGENOM" id="CLU_003601_3_3_9"/>
<dbReference type="UniPathway" id="UPA00193"/>
<dbReference type="Proteomes" id="UP000000564">
    <property type="component" value="Chromosome"/>
</dbReference>
<dbReference type="GO" id="GO:0005524">
    <property type="term" value="F:ATP binding"/>
    <property type="evidence" value="ECO:0007669"/>
    <property type="project" value="UniProtKB-UniRule"/>
</dbReference>
<dbReference type="GO" id="GO:0004329">
    <property type="term" value="F:formate-tetrahydrofolate ligase activity"/>
    <property type="evidence" value="ECO:0007669"/>
    <property type="project" value="UniProtKB-UniRule"/>
</dbReference>
<dbReference type="GO" id="GO:0035999">
    <property type="term" value="P:tetrahydrofolate interconversion"/>
    <property type="evidence" value="ECO:0007669"/>
    <property type="project" value="UniProtKB-UniRule"/>
</dbReference>
<dbReference type="CDD" id="cd00477">
    <property type="entry name" value="FTHFS"/>
    <property type="match status" value="1"/>
</dbReference>
<dbReference type="FunFam" id="3.30.1510.10:FF:000001">
    <property type="entry name" value="Formate--tetrahydrofolate ligase"/>
    <property type="match status" value="1"/>
</dbReference>
<dbReference type="FunFam" id="3.10.410.10:FF:000001">
    <property type="entry name" value="Putative formate--tetrahydrofolate ligase"/>
    <property type="match status" value="1"/>
</dbReference>
<dbReference type="Gene3D" id="3.30.1510.10">
    <property type="entry name" value="Domain 2, N(10)-formyltetrahydrofolate synthetase"/>
    <property type="match status" value="1"/>
</dbReference>
<dbReference type="Gene3D" id="3.10.410.10">
    <property type="entry name" value="Formyltetrahydrofolate synthetase, domain 3"/>
    <property type="match status" value="1"/>
</dbReference>
<dbReference type="Gene3D" id="3.40.50.300">
    <property type="entry name" value="P-loop containing nucleotide triphosphate hydrolases"/>
    <property type="match status" value="1"/>
</dbReference>
<dbReference type="HAMAP" id="MF_01543">
    <property type="entry name" value="FTHFS"/>
    <property type="match status" value="1"/>
</dbReference>
<dbReference type="InterPro" id="IPR000559">
    <property type="entry name" value="Formate_THF_ligase"/>
</dbReference>
<dbReference type="InterPro" id="IPR020628">
    <property type="entry name" value="Formate_THF_ligase_CS"/>
</dbReference>
<dbReference type="InterPro" id="IPR027417">
    <property type="entry name" value="P-loop_NTPase"/>
</dbReference>
<dbReference type="NCBIfam" id="NF010030">
    <property type="entry name" value="PRK13505.1"/>
    <property type="match status" value="1"/>
</dbReference>
<dbReference type="Pfam" id="PF01268">
    <property type="entry name" value="FTHFS"/>
    <property type="match status" value="1"/>
</dbReference>
<dbReference type="SUPFAM" id="SSF52540">
    <property type="entry name" value="P-loop containing nucleoside triphosphate hydrolases"/>
    <property type="match status" value="1"/>
</dbReference>
<dbReference type="PROSITE" id="PS00721">
    <property type="entry name" value="FTHFS_1"/>
    <property type="match status" value="1"/>
</dbReference>
<dbReference type="PROSITE" id="PS00722">
    <property type="entry name" value="FTHFS_2"/>
    <property type="match status" value="1"/>
</dbReference>
<accession>P0DF90</accession>
<accession>Q79X48</accession>
<accession>Q7CF36</accession>
<protein>
    <recommendedName>
        <fullName evidence="1">Formate--tetrahydrofolate ligase 1</fullName>
        <ecNumber evidence="1">6.3.4.3</ecNumber>
    </recommendedName>
    <alternativeName>
        <fullName evidence="1">Formyltetrahydrofolate synthetase 1</fullName>
        <shortName evidence="1">FHS 1</shortName>
        <shortName evidence="1">FTHFS 1</shortName>
    </alternativeName>
</protein>
<evidence type="ECO:0000255" key="1">
    <source>
        <dbReference type="HAMAP-Rule" id="MF_01543"/>
    </source>
</evidence>
<feature type="chain" id="PRO_0000199395" description="Formate--tetrahydrofolate ligase 1">
    <location>
        <begin position="1"/>
        <end position="556"/>
    </location>
</feature>
<feature type="binding site" evidence="1">
    <location>
        <begin position="65"/>
        <end position="72"/>
    </location>
    <ligand>
        <name>ATP</name>
        <dbReference type="ChEBI" id="CHEBI:30616"/>
    </ligand>
</feature>
<gene>
    <name evidence="1" type="primary">fhs1</name>
    <name type="synonym">fhs</name>
    <name type="ordered locus">SpyM3_0853</name>
</gene>
<sequence length="556" mass="59531">MKSDIEIAQSVALQPITDIVKKVGIDGDDIELYGKYKAKLSFEKMKAVEANEPGKLILVTAINPTPAGEGKSTMSIGLADALNQMGKKTMLALREPSLGPVMGIKGGAAGGGYAQVLPMEDINLHFTGDMHAITTANNALSALIDNHLQQGNDLGIDPRRIIWKRVLDLNDRALRQVIVGLGSPVNGVPREDGFDITVASEIMAILCLATDLKDLKKRLADIVVAYTYDRKPVYVRDLKVEGALTLILKDAIKPNLVQTIYGTPALIHGGPFANIAHGCNSVLATSTALRLADYTVTEAGFGADLGAEKFLNIKVPNLPKAPDAIVIVATLRALKMHGGVAKSDLAAENCEAVRLGFANLKRHVENMRQFKVPVVVAINEFVADTEAEIATLKALCEEIKVPVELASVWANGAEGGLALAKTVVRVIDQEAADYKRLYSDEDTLEEKVINIVTQIYGGKAVQFGPKAKTQLKQFAEFGWDKLPVCMAKTQYSFSDNPSLLGAPTDFDITIREFVPKTGAGFIVGLTGDVMTMPGLPKVPAAMAMDVAENGTALGLF</sequence>
<proteinExistence type="inferred from homology"/>
<comment type="catalytic activity">
    <reaction evidence="1">
        <text>(6S)-5,6,7,8-tetrahydrofolate + formate + ATP = (6R)-10-formyltetrahydrofolate + ADP + phosphate</text>
        <dbReference type="Rhea" id="RHEA:20221"/>
        <dbReference type="ChEBI" id="CHEBI:15740"/>
        <dbReference type="ChEBI" id="CHEBI:30616"/>
        <dbReference type="ChEBI" id="CHEBI:43474"/>
        <dbReference type="ChEBI" id="CHEBI:57453"/>
        <dbReference type="ChEBI" id="CHEBI:195366"/>
        <dbReference type="ChEBI" id="CHEBI:456216"/>
        <dbReference type="EC" id="6.3.4.3"/>
    </reaction>
</comment>
<comment type="pathway">
    <text evidence="1">One-carbon metabolism; tetrahydrofolate interconversion.</text>
</comment>
<comment type="similarity">
    <text evidence="1">Belongs to the formate--tetrahydrofolate ligase family.</text>
</comment>
<reference key="1">
    <citation type="journal article" date="2002" name="Proc. Natl. Acad. Sci. U.S.A.">
        <title>Genome sequence of a serotype M3 strain of group A Streptococcus: phage-encoded toxins, the high-virulence phenotype, and clone emergence.</title>
        <authorList>
            <person name="Beres S.B."/>
            <person name="Sylva G.L."/>
            <person name="Barbian K.D."/>
            <person name="Lei B."/>
            <person name="Hoff J.S."/>
            <person name="Mammarella N.D."/>
            <person name="Liu M.-Y."/>
            <person name="Smoot J.C."/>
            <person name="Porcella S.F."/>
            <person name="Parkins L.D."/>
            <person name="Campbell D.S."/>
            <person name="Smith T.M."/>
            <person name="McCormick J.K."/>
            <person name="Leung D.Y.M."/>
            <person name="Schlievert P.M."/>
            <person name="Musser J.M."/>
        </authorList>
    </citation>
    <scope>NUCLEOTIDE SEQUENCE [LARGE SCALE GENOMIC DNA]</scope>
    <source>
        <strain>ATCC BAA-595 / MGAS315</strain>
    </source>
</reference>
<organism>
    <name type="scientific">Streptococcus pyogenes serotype M3 (strain ATCC BAA-595 / MGAS315)</name>
    <dbReference type="NCBI Taxonomy" id="198466"/>
    <lineage>
        <taxon>Bacteria</taxon>
        <taxon>Bacillati</taxon>
        <taxon>Bacillota</taxon>
        <taxon>Bacilli</taxon>
        <taxon>Lactobacillales</taxon>
        <taxon>Streptococcaceae</taxon>
        <taxon>Streptococcus</taxon>
    </lineage>
</organism>
<keyword id="KW-0067">ATP-binding</keyword>
<keyword id="KW-0436">Ligase</keyword>
<keyword id="KW-0547">Nucleotide-binding</keyword>
<keyword id="KW-0554">One-carbon metabolism</keyword>
<name>FTHS1_STRP3</name>